<reference key="1">
    <citation type="journal article" date="2008" name="J. Bacteriol.">
        <title>The complete genome sequence of Actinobacillus pleuropneumoniae L20 (serotype 5b).</title>
        <authorList>
            <person name="Foote S.J."/>
            <person name="Bosse J.T."/>
            <person name="Bouevitch A.B."/>
            <person name="Langford P.R."/>
            <person name="Young N.M."/>
            <person name="Nash J.H.E."/>
        </authorList>
    </citation>
    <scope>NUCLEOTIDE SEQUENCE [LARGE SCALE GENOMIC DNA]</scope>
    <source>
        <strain>L20</strain>
    </source>
</reference>
<keyword id="KW-0997">Cell inner membrane</keyword>
<keyword id="KW-1003">Cell membrane</keyword>
<keyword id="KW-0444">Lipid biosynthesis</keyword>
<keyword id="KW-0443">Lipid metabolism</keyword>
<keyword id="KW-0472">Membrane</keyword>
<keyword id="KW-0594">Phospholipid biosynthesis</keyword>
<keyword id="KW-1208">Phospholipid metabolism</keyword>
<keyword id="KW-1185">Reference proteome</keyword>
<keyword id="KW-0808">Transferase</keyword>
<keyword id="KW-0812">Transmembrane</keyword>
<keyword id="KW-1133">Transmembrane helix</keyword>
<dbReference type="EC" id="2.3.1.275" evidence="1"/>
<dbReference type="EMBL" id="CP000569">
    <property type="protein sequence ID" value="ABN74425.1"/>
    <property type="molecule type" value="Genomic_DNA"/>
</dbReference>
<dbReference type="RefSeq" id="WP_005598446.1">
    <property type="nucleotide sequence ID" value="NC_009053.1"/>
</dbReference>
<dbReference type="SMR" id="A3N1Y9"/>
<dbReference type="STRING" id="416269.APL_1341"/>
<dbReference type="EnsemblBacteria" id="ABN74425">
    <property type="protein sequence ID" value="ABN74425"/>
    <property type="gene ID" value="APL_1341"/>
</dbReference>
<dbReference type="GeneID" id="48599592"/>
<dbReference type="KEGG" id="apl:APL_1341"/>
<dbReference type="eggNOG" id="COG0344">
    <property type="taxonomic scope" value="Bacteria"/>
</dbReference>
<dbReference type="HOGENOM" id="CLU_081254_0_2_6"/>
<dbReference type="UniPathway" id="UPA00085"/>
<dbReference type="Proteomes" id="UP000001432">
    <property type="component" value="Chromosome"/>
</dbReference>
<dbReference type="GO" id="GO:0005886">
    <property type="term" value="C:plasma membrane"/>
    <property type="evidence" value="ECO:0007669"/>
    <property type="project" value="UniProtKB-SubCell"/>
</dbReference>
<dbReference type="GO" id="GO:0043772">
    <property type="term" value="F:acyl-phosphate glycerol-3-phosphate acyltransferase activity"/>
    <property type="evidence" value="ECO:0007669"/>
    <property type="project" value="UniProtKB-UniRule"/>
</dbReference>
<dbReference type="GO" id="GO:0008654">
    <property type="term" value="P:phospholipid biosynthetic process"/>
    <property type="evidence" value="ECO:0007669"/>
    <property type="project" value="UniProtKB-UniRule"/>
</dbReference>
<dbReference type="HAMAP" id="MF_01043">
    <property type="entry name" value="PlsY"/>
    <property type="match status" value="1"/>
</dbReference>
<dbReference type="InterPro" id="IPR003811">
    <property type="entry name" value="G3P_acylTferase_PlsY"/>
</dbReference>
<dbReference type="NCBIfam" id="TIGR00023">
    <property type="entry name" value="glycerol-3-phosphate 1-O-acyltransferase PlsY"/>
    <property type="match status" value="1"/>
</dbReference>
<dbReference type="PANTHER" id="PTHR30309:SF0">
    <property type="entry name" value="GLYCEROL-3-PHOSPHATE ACYLTRANSFERASE-RELATED"/>
    <property type="match status" value="1"/>
</dbReference>
<dbReference type="PANTHER" id="PTHR30309">
    <property type="entry name" value="INNER MEMBRANE PROTEIN YGIH"/>
    <property type="match status" value="1"/>
</dbReference>
<dbReference type="Pfam" id="PF02660">
    <property type="entry name" value="G3P_acyltransf"/>
    <property type="match status" value="1"/>
</dbReference>
<dbReference type="SMART" id="SM01207">
    <property type="entry name" value="G3P_acyltransf"/>
    <property type="match status" value="1"/>
</dbReference>
<accession>A3N1Y9</accession>
<organism>
    <name type="scientific">Actinobacillus pleuropneumoniae serotype 5b (strain L20)</name>
    <dbReference type="NCBI Taxonomy" id="416269"/>
    <lineage>
        <taxon>Bacteria</taxon>
        <taxon>Pseudomonadati</taxon>
        <taxon>Pseudomonadota</taxon>
        <taxon>Gammaproteobacteria</taxon>
        <taxon>Pasteurellales</taxon>
        <taxon>Pasteurellaceae</taxon>
        <taxon>Actinobacillus</taxon>
    </lineage>
</organism>
<evidence type="ECO:0000255" key="1">
    <source>
        <dbReference type="HAMAP-Rule" id="MF_01043"/>
    </source>
</evidence>
<name>PLSY_ACTP2</name>
<gene>
    <name evidence="1" type="primary">plsY</name>
    <name type="ordered locus">APL_1341</name>
</gene>
<proteinExistence type="inferred from homology"/>
<protein>
    <recommendedName>
        <fullName evidence="1">Glycerol-3-phosphate acyltransferase</fullName>
    </recommendedName>
    <alternativeName>
        <fullName evidence="1">Acyl-PO4 G3P acyltransferase</fullName>
    </alternativeName>
    <alternativeName>
        <fullName evidence="1">Acyl-phosphate--glycerol-3-phosphate acyltransferase</fullName>
    </alternativeName>
    <alternativeName>
        <fullName evidence="1">G3P acyltransferase</fullName>
        <shortName evidence="1">GPAT</shortName>
        <ecNumber evidence="1">2.3.1.275</ecNumber>
    </alternativeName>
    <alternativeName>
        <fullName evidence="1">Lysophosphatidic acid synthase</fullName>
        <shortName evidence="1">LPA synthase</shortName>
    </alternativeName>
</protein>
<comment type="function">
    <text evidence="1">Catalyzes the transfer of an acyl group from acyl-phosphate (acyl-PO(4)) to glycerol-3-phosphate (G3P) to form lysophosphatidic acid (LPA). This enzyme utilizes acyl-phosphate as fatty acyl donor, but not acyl-CoA or acyl-ACP.</text>
</comment>
<comment type="catalytic activity">
    <reaction evidence="1">
        <text>an acyl phosphate + sn-glycerol 3-phosphate = a 1-acyl-sn-glycero-3-phosphate + phosphate</text>
        <dbReference type="Rhea" id="RHEA:34075"/>
        <dbReference type="ChEBI" id="CHEBI:43474"/>
        <dbReference type="ChEBI" id="CHEBI:57597"/>
        <dbReference type="ChEBI" id="CHEBI:57970"/>
        <dbReference type="ChEBI" id="CHEBI:59918"/>
        <dbReference type="EC" id="2.3.1.275"/>
    </reaction>
</comment>
<comment type="pathway">
    <text evidence="1">Lipid metabolism; phospholipid metabolism.</text>
</comment>
<comment type="subunit">
    <text evidence="1">Probably interacts with PlsX.</text>
</comment>
<comment type="subcellular location">
    <subcellularLocation>
        <location evidence="1">Cell inner membrane</location>
        <topology evidence="1">Multi-pass membrane protein</topology>
    </subcellularLocation>
</comment>
<comment type="similarity">
    <text evidence="1">Belongs to the PlsY family.</text>
</comment>
<sequence length="196" mass="21531">MSITVYLLIVFAYLLGSVSSAIIFCRLAGLPDPRENGSHNPGATNVLRIGGKFSALGVLLFDILKGGLPVLLAFNFKLEPSEIGLIALAACLGHIFPLFFRFRGGKGVATAFGALLSISFAASAAGLCTWLIVFLLFGYSSLSAVITALIMPFYIWWFLPEFTFPVALVCCLLVYRHHDNIQRLWRGQEQPMWARK</sequence>
<feature type="chain" id="PRO_1000064155" description="Glycerol-3-phosphate acyltransferase">
    <location>
        <begin position="1"/>
        <end position="196"/>
    </location>
</feature>
<feature type="transmembrane region" description="Helical" evidence="1">
    <location>
        <begin position="5"/>
        <end position="25"/>
    </location>
</feature>
<feature type="transmembrane region" description="Helical" evidence="1">
    <location>
        <begin position="53"/>
        <end position="73"/>
    </location>
</feature>
<feature type="transmembrane region" description="Helical" evidence="1">
    <location>
        <begin position="80"/>
        <end position="100"/>
    </location>
</feature>
<feature type="transmembrane region" description="Helical" evidence="1">
    <location>
        <begin position="107"/>
        <end position="127"/>
    </location>
</feature>
<feature type="transmembrane region" description="Helical" evidence="1">
    <location>
        <begin position="130"/>
        <end position="150"/>
    </location>
</feature>
<feature type="transmembrane region" description="Helical" evidence="1">
    <location>
        <begin position="153"/>
        <end position="173"/>
    </location>
</feature>